<protein>
    <recommendedName>
        <fullName evidence="1">Ribosomal protein uS12 methylthiotransferase RimO</fullName>
        <shortName evidence="1">uS12 MTTase</shortName>
        <shortName evidence="1">uS12 methylthiotransferase</shortName>
        <ecNumber evidence="1">2.8.4.4</ecNumber>
    </recommendedName>
    <alternativeName>
        <fullName evidence="1">Ribosomal protein uS12 (aspartate-C(3))-methylthiotransferase</fullName>
    </alternativeName>
    <alternativeName>
        <fullName evidence="1">Ribosome maturation factor RimO</fullName>
    </alternativeName>
</protein>
<sequence>MSKVTPQPKIGFVSLGCPKNLVDSERILTELRTEGYDVVPSYDDADMVIVNTCGFIDSAVQESLEAIGEALNENGKVIVTGCLGAKEDQIREVHPKVLEITGPHSYEQVLEHVHHYVPKPKHNPFLSLVPEQGVKLTPRHYAYLKISEGCNHRCTFCIIPSMRGDLVSRPIGEVLSEAKRLVDAGVKEILVISQDTSAYGVDVKHRTGFHNGEPVKTSMVSLCEQLSKLGIWTRLHYVYPYPHVDDVIPLMAEGKILPYLDIPLQHASPRILKLMKRPGSVDRQLARIKQWREICPELTLRSTFIVGFPSETEEDFQMLLDFLKEARLDRVGCFKYSPVEGADANALPDQVPEEVKEERWNRFMQLQQQISAERLQEKVGREILVIIDEVDEEGAIGRSMADAPEIDGAVYLNGETNVKPGDILRVKVEHADEYDLWGSRV</sequence>
<dbReference type="EC" id="2.8.4.4" evidence="1"/>
<dbReference type="EMBL" id="CP000038">
    <property type="protein sequence ID" value="AAZ87563.1"/>
    <property type="molecule type" value="Genomic_DNA"/>
</dbReference>
<dbReference type="RefSeq" id="WP_000049377.1">
    <property type="nucleotide sequence ID" value="NC_007384.1"/>
</dbReference>
<dbReference type="SMR" id="Q3Z3U9"/>
<dbReference type="GeneID" id="93776587"/>
<dbReference type="KEGG" id="ssn:SSON_0818"/>
<dbReference type="HOGENOM" id="CLU_018697_0_0_6"/>
<dbReference type="Proteomes" id="UP000002529">
    <property type="component" value="Chromosome"/>
</dbReference>
<dbReference type="GO" id="GO:0005829">
    <property type="term" value="C:cytosol"/>
    <property type="evidence" value="ECO:0007669"/>
    <property type="project" value="TreeGrafter"/>
</dbReference>
<dbReference type="GO" id="GO:0051539">
    <property type="term" value="F:4 iron, 4 sulfur cluster binding"/>
    <property type="evidence" value="ECO:0007669"/>
    <property type="project" value="UniProtKB-UniRule"/>
</dbReference>
<dbReference type="GO" id="GO:0035599">
    <property type="term" value="F:aspartic acid methylthiotransferase activity"/>
    <property type="evidence" value="ECO:0007669"/>
    <property type="project" value="TreeGrafter"/>
</dbReference>
<dbReference type="GO" id="GO:0046872">
    <property type="term" value="F:metal ion binding"/>
    <property type="evidence" value="ECO:0007669"/>
    <property type="project" value="UniProtKB-KW"/>
</dbReference>
<dbReference type="GO" id="GO:0103039">
    <property type="term" value="F:protein methylthiotransferase activity"/>
    <property type="evidence" value="ECO:0007669"/>
    <property type="project" value="UniProtKB-EC"/>
</dbReference>
<dbReference type="GO" id="GO:0006400">
    <property type="term" value="P:tRNA modification"/>
    <property type="evidence" value="ECO:0007669"/>
    <property type="project" value="InterPro"/>
</dbReference>
<dbReference type="CDD" id="cd01335">
    <property type="entry name" value="Radical_SAM"/>
    <property type="match status" value="1"/>
</dbReference>
<dbReference type="FunFam" id="2.40.50.140:FF:000060">
    <property type="entry name" value="Ribosomal protein S12 methylthiotransferase RimO"/>
    <property type="match status" value="1"/>
</dbReference>
<dbReference type="FunFam" id="3.40.50.12160:FF:000002">
    <property type="entry name" value="Ribosomal protein S12 methylthiotransferase RimO"/>
    <property type="match status" value="1"/>
</dbReference>
<dbReference type="FunFam" id="3.80.30.20:FF:000001">
    <property type="entry name" value="tRNA-2-methylthio-N(6)-dimethylallyladenosine synthase 2"/>
    <property type="match status" value="1"/>
</dbReference>
<dbReference type="Gene3D" id="3.40.50.12160">
    <property type="entry name" value="Methylthiotransferase, N-terminal domain"/>
    <property type="match status" value="1"/>
</dbReference>
<dbReference type="Gene3D" id="2.40.50.140">
    <property type="entry name" value="Nucleic acid-binding proteins"/>
    <property type="match status" value="1"/>
</dbReference>
<dbReference type="Gene3D" id="3.80.30.20">
    <property type="entry name" value="tm_1862 like domain"/>
    <property type="match status" value="1"/>
</dbReference>
<dbReference type="HAMAP" id="MF_01865">
    <property type="entry name" value="MTTase_RimO"/>
    <property type="match status" value="1"/>
</dbReference>
<dbReference type="InterPro" id="IPR006638">
    <property type="entry name" value="Elp3/MiaA/NifB-like_rSAM"/>
</dbReference>
<dbReference type="InterPro" id="IPR005839">
    <property type="entry name" value="Methylthiotransferase"/>
</dbReference>
<dbReference type="InterPro" id="IPR020612">
    <property type="entry name" value="Methylthiotransferase_CS"/>
</dbReference>
<dbReference type="InterPro" id="IPR013848">
    <property type="entry name" value="Methylthiotransferase_N"/>
</dbReference>
<dbReference type="InterPro" id="IPR038135">
    <property type="entry name" value="Methylthiotransferase_N_sf"/>
</dbReference>
<dbReference type="InterPro" id="IPR012340">
    <property type="entry name" value="NA-bd_OB-fold"/>
</dbReference>
<dbReference type="InterPro" id="IPR005840">
    <property type="entry name" value="Ribosomal_uS12_MeSTrfase_RimO"/>
</dbReference>
<dbReference type="InterPro" id="IPR007197">
    <property type="entry name" value="rSAM"/>
</dbReference>
<dbReference type="InterPro" id="IPR023404">
    <property type="entry name" value="rSAM_horseshoe"/>
</dbReference>
<dbReference type="InterPro" id="IPR002792">
    <property type="entry name" value="TRAM_dom"/>
</dbReference>
<dbReference type="NCBIfam" id="TIGR01125">
    <property type="entry name" value="30S ribosomal protein S12 methylthiotransferase RimO"/>
    <property type="match status" value="1"/>
</dbReference>
<dbReference type="NCBIfam" id="TIGR00089">
    <property type="entry name" value="MiaB/RimO family radical SAM methylthiotransferase"/>
    <property type="match status" value="1"/>
</dbReference>
<dbReference type="PANTHER" id="PTHR43837">
    <property type="entry name" value="RIBOSOMAL PROTEIN S12 METHYLTHIOTRANSFERASE RIMO"/>
    <property type="match status" value="1"/>
</dbReference>
<dbReference type="PANTHER" id="PTHR43837:SF1">
    <property type="entry name" value="RIBOSOMAL PROTEIN US12 METHYLTHIOTRANSFERASE RIMO"/>
    <property type="match status" value="1"/>
</dbReference>
<dbReference type="Pfam" id="PF04055">
    <property type="entry name" value="Radical_SAM"/>
    <property type="match status" value="1"/>
</dbReference>
<dbReference type="Pfam" id="PF18693">
    <property type="entry name" value="TRAM_2"/>
    <property type="match status" value="1"/>
</dbReference>
<dbReference type="Pfam" id="PF00919">
    <property type="entry name" value="UPF0004"/>
    <property type="match status" value="1"/>
</dbReference>
<dbReference type="SFLD" id="SFLDG01082">
    <property type="entry name" value="B12-binding_domain_containing"/>
    <property type="match status" value="1"/>
</dbReference>
<dbReference type="SFLD" id="SFLDG01061">
    <property type="entry name" value="methylthiotransferase"/>
    <property type="match status" value="1"/>
</dbReference>
<dbReference type="SFLD" id="SFLDF00274">
    <property type="entry name" value="ribosomal_protein_S12_methylth"/>
    <property type="match status" value="1"/>
</dbReference>
<dbReference type="SMART" id="SM00729">
    <property type="entry name" value="Elp3"/>
    <property type="match status" value="1"/>
</dbReference>
<dbReference type="SUPFAM" id="SSF102114">
    <property type="entry name" value="Radical SAM enzymes"/>
    <property type="match status" value="1"/>
</dbReference>
<dbReference type="PROSITE" id="PS51449">
    <property type="entry name" value="MTTASE_N"/>
    <property type="match status" value="1"/>
</dbReference>
<dbReference type="PROSITE" id="PS01278">
    <property type="entry name" value="MTTASE_RADICAL"/>
    <property type="match status" value="1"/>
</dbReference>
<dbReference type="PROSITE" id="PS51918">
    <property type="entry name" value="RADICAL_SAM"/>
    <property type="match status" value="1"/>
</dbReference>
<dbReference type="PROSITE" id="PS50926">
    <property type="entry name" value="TRAM"/>
    <property type="match status" value="1"/>
</dbReference>
<evidence type="ECO:0000255" key="1">
    <source>
        <dbReference type="HAMAP-Rule" id="MF_01865"/>
    </source>
</evidence>
<evidence type="ECO:0000255" key="2">
    <source>
        <dbReference type="PROSITE-ProRule" id="PRU01266"/>
    </source>
</evidence>
<feature type="chain" id="PRO_0000375013" description="Ribosomal protein uS12 methylthiotransferase RimO">
    <location>
        <begin position="1"/>
        <end position="441"/>
    </location>
</feature>
<feature type="domain" description="MTTase N-terminal" evidence="1">
    <location>
        <begin position="8"/>
        <end position="118"/>
    </location>
</feature>
<feature type="domain" description="Radical SAM core" evidence="2">
    <location>
        <begin position="136"/>
        <end position="373"/>
    </location>
</feature>
<feature type="domain" description="TRAM" evidence="1">
    <location>
        <begin position="376"/>
        <end position="441"/>
    </location>
</feature>
<feature type="binding site" evidence="1">
    <location>
        <position position="17"/>
    </location>
    <ligand>
        <name>[4Fe-4S] cluster</name>
        <dbReference type="ChEBI" id="CHEBI:49883"/>
        <label>1</label>
    </ligand>
</feature>
<feature type="binding site" evidence="1">
    <location>
        <position position="53"/>
    </location>
    <ligand>
        <name>[4Fe-4S] cluster</name>
        <dbReference type="ChEBI" id="CHEBI:49883"/>
        <label>1</label>
    </ligand>
</feature>
<feature type="binding site" evidence="1">
    <location>
        <position position="82"/>
    </location>
    <ligand>
        <name>[4Fe-4S] cluster</name>
        <dbReference type="ChEBI" id="CHEBI:49883"/>
        <label>1</label>
    </ligand>
</feature>
<feature type="binding site" evidence="1">
    <location>
        <position position="150"/>
    </location>
    <ligand>
        <name>[4Fe-4S] cluster</name>
        <dbReference type="ChEBI" id="CHEBI:49883"/>
        <label>2</label>
        <note>4Fe-4S-S-AdoMet</note>
    </ligand>
</feature>
<feature type="binding site" evidence="1">
    <location>
        <position position="154"/>
    </location>
    <ligand>
        <name>[4Fe-4S] cluster</name>
        <dbReference type="ChEBI" id="CHEBI:49883"/>
        <label>2</label>
        <note>4Fe-4S-S-AdoMet</note>
    </ligand>
</feature>
<feature type="binding site" evidence="1">
    <location>
        <position position="157"/>
    </location>
    <ligand>
        <name>[4Fe-4S] cluster</name>
        <dbReference type="ChEBI" id="CHEBI:49883"/>
        <label>2</label>
        <note>4Fe-4S-S-AdoMet</note>
    </ligand>
</feature>
<name>RIMO_SHISS</name>
<organism>
    <name type="scientific">Shigella sonnei (strain Ss046)</name>
    <dbReference type="NCBI Taxonomy" id="300269"/>
    <lineage>
        <taxon>Bacteria</taxon>
        <taxon>Pseudomonadati</taxon>
        <taxon>Pseudomonadota</taxon>
        <taxon>Gammaproteobacteria</taxon>
        <taxon>Enterobacterales</taxon>
        <taxon>Enterobacteriaceae</taxon>
        <taxon>Shigella</taxon>
    </lineage>
</organism>
<keyword id="KW-0004">4Fe-4S</keyword>
<keyword id="KW-0963">Cytoplasm</keyword>
<keyword id="KW-0408">Iron</keyword>
<keyword id="KW-0411">Iron-sulfur</keyword>
<keyword id="KW-0479">Metal-binding</keyword>
<keyword id="KW-1185">Reference proteome</keyword>
<keyword id="KW-0949">S-adenosyl-L-methionine</keyword>
<keyword id="KW-0808">Transferase</keyword>
<accession>Q3Z3U9</accession>
<gene>
    <name evidence="1" type="primary">rimO</name>
    <name type="ordered locus">SSON_0818</name>
</gene>
<comment type="function">
    <text evidence="1">Catalyzes the methylthiolation of an aspartic acid residue of ribosomal protein uS12.</text>
</comment>
<comment type="catalytic activity">
    <reaction evidence="1">
        <text>L-aspartate(89)-[ribosomal protein uS12]-hydrogen + (sulfur carrier)-SH + AH2 + 2 S-adenosyl-L-methionine = 3-methylsulfanyl-L-aspartate(89)-[ribosomal protein uS12]-hydrogen + (sulfur carrier)-H + 5'-deoxyadenosine + L-methionine + A + S-adenosyl-L-homocysteine + 2 H(+)</text>
        <dbReference type="Rhea" id="RHEA:37087"/>
        <dbReference type="Rhea" id="RHEA-COMP:10460"/>
        <dbReference type="Rhea" id="RHEA-COMP:10461"/>
        <dbReference type="Rhea" id="RHEA-COMP:14737"/>
        <dbReference type="Rhea" id="RHEA-COMP:14739"/>
        <dbReference type="ChEBI" id="CHEBI:13193"/>
        <dbReference type="ChEBI" id="CHEBI:15378"/>
        <dbReference type="ChEBI" id="CHEBI:17319"/>
        <dbReference type="ChEBI" id="CHEBI:17499"/>
        <dbReference type="ChEBI" id="CHEBI:29917"/>
        <dbReference type="ChEBI" id="CHEBI:29961"/>
        <dbReference type="ChEBI" id="CHEBI:57844"/>
        <dbReference type="ChEBI" id="CHEBI:57856"/>
        <dbReference type="ChEBI" id="CHEBI:59789"/>
        <dbReference type="ChEBI" id="CHEBI:64428"/>
        <dbReference type="ChEBI" id="CHEBI:73599"/>
        <dbReference type="EC" id="2.8.4.4"/>
    </reaction>
</comment>
<comment type="cofactor">
    <cofactor evidence="1">
        <name>[4Fe-4S] cluster</name>
        <dbReference type="ChEBI" id="CHEBI:49883"/>
    </cofactor>
    <text evidence="1">Binds 2 [4Fe-4S] clusters. One cluster is coordinated with 3 cysteines and an exchangeable S-adenosyl-L-methionine.</text>
</comment>
<comment type="subcellular location">
    <subcellularLocation>
        <location evidence="1">Cytoplasm</location>
    </subcellularLocation>
</comment>
<comment type="similarity">
    <text evidence="1">Belongs to the methylthiotransferase family. RimO subfamily.</text>
</comment>
<reference key="1">
    <citation type="journal article" date="2005" name="Nucleic Acids Res.">
        <title>Genome dynamics and diversity of Shigella species, the etiologic agents of bacillary dysentery.</title>
        <authorList>
            <person name="Yang F."/>
            <person name="Yang J."/>
            <person name="Zhang X."/>
            <person name="Chen L."/>
            <person name="Jiang Y."/>
            <person name="Yan Y."/>
            <person name="Tang X."/>
            <person name="Wang J."/>
            <person name="Xiong Z."/>
            <person name="Dong J."/>
            <person name="Xue Y."/>
            <person name="Zhu Y."/>
            <person name="Xu X."/>
            <person name="Sun L."/>
            <person name="Chen S."/>
            <person name="Nie H."/>
            <person name="Peng J."/>
            <person name="Xu J."/>
            <person name="Wang Y."/>
            <person name="Yuan Z."/>
            <person name="Wen Y."/>
            <person name="Yao Z."/>
            <person name="Shen Y."/>
            <person name="Qiang B."/>
            <person name="Hou Y."/>
            <person name="Yu J."/>
            <person name="Jin Q."/>
        </authorList>
    </citation>
    <scope>NUCLEOTIDE SEQUENCE [LARGE SCALE GENOMIC DNA]</scope>
    <source>
        <strain>Ss046</strain>
    </source>
</reference>
<proteinExistence type="inferred from homology"/>